<reference key="1">
    <citation type="journal article" date="2006" name="Proc. Natl. Acad. Sci. U.S.A.">
        <title>Comparative genomics of the lactic acid bacteria.</title>
        <authorList>
            <person name="Makarova K.S."/>
            <person name="Slesarev A."/>
            <person name="Wolf Y.I."/>
            <person name="Sorokin A."/>
            <person name="Mirkin B."/>
            <person name="Koonin E.V."/>
            <person name="Pavlov A."/>
            <person name="Pavlova N."/>
            <person name="Karamychev V."/>
            <person name="Polouchine N."/>
            <person name="Shakhova V."/>
            <person name="Grigoriev I."/>
            <person name="Lou Y."/>
            <person name="Rohksar D."/>
            <person name="Lucas S."/>
            <person name="Huang K."/>
            <person name="Goodstein D.M."/>
            <person name="Hawkins T."/>
            <person name="Plengvidhya V."/>
            <person name="Welker D."/>
            <person name="Hughes J."/>
            <person name="Goh Y."/>
            <person name="Benson A."/>
            <person name="Baldwin K."/>
            <person name="Lee J.-H."/>
            <person name="Diaz-Muniz I."/>
            <person name="Dosti B."/>
            <person name="Smeianov V."/>
            <person name="Wechter W."/>
            <person name="Barabote R."/>
            <person name="Lorca G."/>
            <person name="Altermann E."/>
            <person name="Barrangou R."/>
            <person name="Ganesan B."/>
            <person name="Xie Y."/>
            <person name="Rawsthorne H."/>
            <person name="Tamir D."/>
            <person name="Parker C."/>
            <person name="Breidt F."/>
            <person name="Broadbent J.R."/>
            <person name="Hutkins R."/>
            <person name="O'Sullivan D."/>
            <person name="Steele J."/>
            <person name="Unlu G."/>
            <person name="Saier M.H. Jr."/>
            <person name="Klaenhammer T."/>
            <person name="Richardson P."/>
            <person name="Kozyavkin S."/>
            <person name="Weimer B.C."/>
            <person name="Mills D.A."/>
        </authorList>
    </citation>
    <scope>NUCLEOTIDE SEQUENCE [LARGE SCALE GENOMIC DNA]</scope>
    <source>
        <strain>SK11</strain>
    </source>
</reference>
<comment type="function">
    <text evidence="1">Catalyzes the reversible conversion of 2-phosphoglycerate (2-PG) into phosphoenolpyruvate (PEP). It is essential for the degradation of carbohydrates via glycolysis.</text>
</comment>
<comment type="catalytic activity">
    <reaction evidence="1">
        <text>(2R)-2-phosphoglycerate = phosphoenolpyruvate + H2O</text>
        <dbReference type="Rhea" id="RHEA:10164"/>
        <dbReference type="ChEBI" id="CHEBI:15377"/>
        <dbReference type="ChEBI" id="CHEBI:58289"/>
        <dbReference type="ChEBI" id="CHEBI:58702"/>
        <dbReference type="EC" id="4.2.1.11"/>
    </reaction>
</comment>
<comment type="cofactor">
    <cofactor evidence="1">
        <name>Mg(2+)</name>
        <dbReference type="ChEBI" id="CHEBI:18420"/>
    </cofactor>
    <text evidence="1">Binds a second Mg(2+) ion via substrate during catalysis.</text>
</comment>
<comment type="pathway">
    <text evidence="1">Carbohydrate degradation; glycolysis; pyruvate from D-glyceraldehyde 3-phosphate: step 4/5.</text>
</comment>
<comment type="subcellular location">
    <subcellularLocation>
        <location evidence="1">Cytoplasm</location>
    </subcellularLocation>
    <subcellularLocation>
        <location evidence="1">Secreted</location>
    </subcellularLocation>
    <subcellularLocation>
        <location evidence="1">Cell surface</location>
    </subcellularLocation>
    <text evidence="1">Fractions of enolase are present in both the cytoplasm and on the cell surface.</text>
</comment>
<comment type="similarity">
    <text evidence="1">Belongs to the enolase family.</text>
</comment>
<organism>
    <name type="scientific">Lactococcus lactis subsp. cremoris (strain SK11)</name>
    <dbReference type="NCBI Taxonomy" id="272622"/>
    <lineage>
        <taxon>Bacteria</taxon>
        <taxon>Bacillati</taxon>
        <taxon>Bacillota</taxon>
        <taxon>Bacilli</taxon>
        <taxon>Lactobacillales</taxon>
        <taxon>Streptococcaceae</taxon>
        <taxon>Lactococcus</taxon>
        <taxon>Lactococcus cremoris subsp. cremoris</taxon>
    </lineage>
</organism>
<gene>
    <name evidence="1" type="primary">eno1</name>
    <name type="ordered locus">LACR_0283</name>
</gene>
<evidence type="ECO:0000255" key="1">
    <source>
        <dbReference type="HAMAP-Rule" id="MF_00318"/>
    </source>
</evidence>
<sequence>MTVTIENIHAREIFDSRGNPTVEVDVRLTDGTLGRAAVPSGASTGDREAVELRDGGARLQGKDVSKAVANVNGEIYEALKGQSPFNQAKLDHLMIELDGTKNKSRLGANAILGVSMAIARAAANSEKIPLYRYLGGVDLELPQPFFNVINGGVHADSGIDVQEFLITPVKRASFRDGLEKIANIYHTLKKILADKGLETAVGDEGGFAPKLGSTENAIATLYQAIERAGYVPGEEIAIAIDPASSEFYDDKEKVYHFEGQKLTSAELLTYYEGLVEKYPALISIEDGFSEHDWAGFAAQTKVQGQKIQLVGDDIFVTNPEIFKEGIQKGVANAILIKLNQIGTVTEAIEAISLARKAGYKTMISHRSGETVDSFIADFAVAMHAGQIKTGSMARSERVEKYNQFLRIEEELLGLEVTK</sequence>
<proteinExistence type="inferred from homology"/>
<keyword id="KW-0963">Cytoplasm</keyword>
<keyword id="KW-0324">Glycolysis</keyword>
<keyword id="KW-0456">Lyase</keyword>
<keyword id="KW-0460">Magnesium</keyword>
<keyword id="KW-0479">Metal-binding</keyword>
<keyword id="KW-0964">Secreted</keyword>
<name>ENO1_LACLS</name>
<dbReference type="EC" id="4.2.1.11" evidence="1"/>
<dbReference type="EMBL" id="CP000425">
    <property type="protein sequence ID" value="ABJ71894.1"/>
    <property type="molecule type" value="Genomic_DNA"/>
</dbReference>
<dbReference type="SMR" id="Q032H8"/>
<dbReference type="KEGG" id="llc:LACR_0283"/>
<dbReference type="HOGENOM" id="CLU_031223_2_1_9"/>
<dbReference type="UniPathway" id="UPA00109">
    <property type="reaction ID" value="UER00187"/>
</dbReference>
<dbReference type="Proteomes" id="UP000000240">
    <property type="component" value="Chromosome"/>
</dbReference>
<dbReference type="GO" id="GO:0009986">
    <property type="term" value="C:cell surface"/>
    <property type="evidence" value="ECO:0007669"/>
    <property type="project" value="UniProtKB-SubCell"/>
</dbReference>
<dbReference type="GO" id="GO:0005576">
    <property type="term" value="C:extracellular region"/>
    <property type="evidence" value="ECO:0007669"/>
    <property type="project" value="UniProtKB-SubCell"/>
</dbReference>
<dbReference type="GO" id="GO:0009274">
    <property type="term" value="C:peptidoglycan-based cell wall"/>
    <property type="evidence" value="ECO:0007669"/>
    <property type="project" value="UniProtKB-ARBA"/>
</dbReference>
<dbReference type="GO" id="GO:0000015">
    <property type="term" value="C:phosphopyruvate hydratase complex"/>
    <property type="evidence" value="ECO:0007669"/>
    <property type="project" value="InterPro"/>
</dbReference>
<dbReference type="GO" id="GO:0000287">
    <property type="term" value="F:magnesium ion binding"/>
    <property type="evidence" value="ECO:0007669"/>
    <property type="project" value="UniProtKB-UniRule"/>
</dbReference>
<dbReference type="GO" id="GO:0004634">
    <property type="term" value="F:phosphopyruvate hydratase activity"/>
    <property type="evidence" value="ECO:0007669"/>
    <property type="project" value="UniProtKB-UniRule"/>
</dbReference>
<dbReference type="GO" id="GO:0006096">
    <property type="term" value="P:glycolytic process"/>
    <property type="evidence" value="ECO:0007669"/>
    <property type="project" value="UniProtKB-UniRule"/>
</dbReference>
<dbReference type="CDD" id="cd03313">
    <property type="entry name" value="enolase"/>
    <property type="match status" value="1"/>
</dbReference>
<dbReference type="FunFam" id="3.30.390.10:FF:000001">
    <property type="entry name" value="Enolase"/>
    <property type="match status" value="1"/>
</dbReference>
<dbReference type="Gene3D" id="3.20.20.120">
    <property type="entry name" value="Enolase-like C-terminal domain"/>
    <property type="match status" value="1"/>
</dbReference>
<dbReference type="Gene3D" id="3.30.390.10">
    <property type="entry name" value="Enolase-like, N-terminal domain"/>
    <property type="match status" value="1"/>
</dbReference>
<dbReference type="HAMAP" id="MF_00318">
    <property type="entry name" value="Enolase"/>
    <property type="match status" value="1"/>
</dbReference>
<dbReference type="InterPro" id="IPR000941">
    <property type="entry name" value="Enolase"/>
</dbReference>
<dbReference type="InterPro" id="IPR036849">
    <property type="entry name" value="Enolase-like_C_sf"/>
</dbReference>
<dbReference type="InterPro" id="IPR029017">
    <property type="entry name" value="Enolase-like_N"/>
</dbReference>
<dbReference type="InterPro" id="IPR020810">
    <property type="entry name" value="Enolase_C"/>
</dbReference>
<dbReference type="InterPro" id="IPR020809">
    <property type="entry name" value="Enolase_CS"/>
</dbReference>
<dbReference type="InterPro" id="IPR020811">
    <property type="entry name" value="Enolase_N"/>
</dbReference>
<dbReference type="NCBIfam" id="TIGR01060">
    <property type="entry name" value="eno"/>
    <property type="match status" value="1"/>
</dbReference>
<dbReference type="PANTHER" id="PTHR11902">
    <property type="entry name" value="ENOLASE"/>
    <property type="match status" value="1"/>
</dbReference>
<dbReference type="PANTHER" id="PTHR11902:SF1">
    <property type="entry name" value="ENOLASE"/>
    <property type="match status" value="1"/>
</dbReference>
<dbReference type="Pfam" id="PF00113">
    <property type="entry name" value="Enolase_C"/>
    <property type="match status" value="1"/>
</dbReference>
<dbReference type="Pfam" id="PF03952">
    <property type="entry name" value="Enolase_N"/>
    <property type="match status" value="1"/>
</dbReference>
<dbReference type="PIRSF" id="PIRSF001400">
    <property type="entry name" value="Enolase"/>
    <property type="match status" value="1"/>
</dbReference>
<dbReference type="PRINTS" id="PR00148">
    <property type="entry name" value="ENOLASE"/>
</dbReference>
<dbReference type="SFLD" id="SFLDS00001">
    <property type="entry name" value="Enolase"/>
    <property type="match status" value="1"/>
</dbReference>
<dbReference type="SFLD" id="SFLDF00002">
    <property type="entry name" value="enolase"/>
    <property type="match status" value="1"/>
</dbReference>
<dbReference type="SMART" id="SM01192">
    <property type="entry name" value="Enolase_C"/>
    <property type="match status" value="1"/>
</dbReference>
<dbReference type="SMART" id="SM01193">
    <property type="entry name" value="Enolase_N"/>
    <property type="match status" value="1"/>
</dbReference>
<dbReference type="SUPFAM" id="SSF51604">
    <property type="entry name" value="Enolase C-terminal domain-like"/>
    <property type="match status" value="1"/>
</dbReference>
<dbReference type="SUPFAM" id="SSF54826">
    <property type="entry name" value="Enolase N-terminal domain-like"/>
    <property type="match status" value="1"/>
</dbReference>
<dbReference type="PROSITE" id="PS00164">
    <property type="entry name" value="ENOLASE"/>
    <property type="match status" value="1"/>
</dbReference>
<accession>Q032H8</accession>
<feature type="chain" id="PRO_0000280857" description="Enolase 1">
    <location>
        <begin position="1"/>
        <end position="418"/>
    </location>
</feature>
<feature type="active site" description="Proton donor" evidence="1">
    <location>
        <position position="204"/>
    </location>
</feature>
<feature type="active site" description="Proton acceptor" evidence="1">
    <location>
        <position position="337"/>
    </location>
</feature>
<feature type="binding site" evidence="1">
    <location>
        <position position="162"/>
    </location>
    <ligand>
        <name>(2R)-2-phosphoglycerate</name>
        <dbReference type="ChEBI" id="CHEBI:58289"/>
    </ligand>
</feature>
<feature type="binding site" evidence="1">
    <location>
        <position position="241"/>
    </location>
    <ligand>
        <name>Mg(2+)</name>
        <dbReference type="ChEBI" id="CHEBI:18420"/>
    </ligand>
</feature>
<feature type="binding site" evidence="1">
    <location>
        <position position="285"/>
    </location>
    <ligand>
        <name>Mg(2+)</name>
        <dbReference type="ChEBI" id="CHEBI:18420"/>
    </ligand>
</feature>
<feature type="binding site" evidence="1">
    <location>
        <position position="312"/>
    </location>
    <ligand>
        <name>Mg(2+)</name>
        <dbReference type="ChEBI" id="CHEBI:18420"/>
    </ligand>
</feature>
<feature type="binding site" evidence="1">
    <location>
        <position position="337"/>
    </location>
    <ligand>
        <name>(2R)-2-phosphoglycerate</name>
        <dbReference type="ChEBI" id="CHEBI:58289"/>
    </ligand>
</feature>
<feature type="binding site" evidence="1">
    <location>
        <position position="366"/>
    </location>
    <ligand>
        <name>(2R)-2-phosphoglycerate</name>
        <dbReference type="ChEBI" id="CHEBI:58289"/>
    </ligand>
</feature>
<feature type="binding site" evidence="1">
    <location>
        <position position="367"/>
    </location>
    <ligand>
        <name>(2R)-2-phosphoglycerate</name>
        <dbReference type="ChEBI" id="CHEBI:58289"/>
    </ligand>
</feature>
<feature type="binding site" evidence="1">
    <location>
        <position position="388"/>
    </location>
    <ligand>
        <name>(2R)-2-phosphoglycerate</name>
        <dbReference type="ChEBI" id="CHEBI:58289"/>
    </ligand>
</feature>
<protein>
    <recommendedName>
        <fullName evidence="1">Enolase 1</fullName>
        <ecNumber evidence="1">4.2.1.11</ecNumber>
    </recommendedName>
    <alternativeName>
        <fullName evidence="1">2-phospho-D-glycerate hydro-lyase 1</fullName>
    </alternativeName>
    <alternativeName>
        <fullName evidence="1">2-phosphoglycerate dehydratase 1</fullName>
    </alternativeName>
</protein>